<proteinExistence type="inferred from homology"/>
<name>RSMH_RICCK</name>
<protein>
    <recommendedName>
        <fullName evidence="1">Ribosomal RNA small subunit methyltransferase H</fullName>
        <ecNumber evidence="1">2.1.1.199</ecNumber>
    </recommendedName>
    <alternativeName>
        <fullName evidence="1">16S rRNA m(4)C1402 methyltransferase</fullName>
    </alternativeName>
    <alternativeName>
        <fullName evidence="1">rRNA (cytosine-N(4)-)-methyltransferase RsmH</fullName>
    </alternativeName>
</protein>
<organism>
    <name type="scientific">Rickettsia canadensis (strain McKiel)</name>
    <dbReference type="NCBI Taxonomy" id="293613"/>
    <lineage>
        <taxon>Bacteria</taxon>
        <taxon>Pseudomonadati</taxon>
        <taxon>Pseudomonadota</taxon>
        <taxon>Alphaproteobacteria</taxon>
        <taxon>Rickettsiales</taxon>
        <taxon>Rickettsiaceae</taxon>
        <taxon>Rickettsieae</taxon>
        <taxon>Rickettsia</taxon>
        <taxon>belli group</taxon>
    </lineage>
</organism>
<dbReference type="EC" id="2.1.1.199" evidence="1"/>
<dbReference type="EMBL" id="CP000409">
    <property type="protein sequence ID" value="ABV73358.1"/>
    <property type="molecule type" value="Genomic_DNA"/>
</dbReference>
<dbReference type="RefSeq" id="WP_012148557.1">
    <property type="nucleotide sequence ID" value="NC_009879.1"/>
</dbReference>
<dbReference type="SMR" id="A8EYC5"/>
<dbReference type="STRING" id="293613.A1E_02065"/>
<dbReference type="KEGG" id="rcm:A1E_02065"/>
<dbReference type="eggNOG" id="COG0275">
    <property type="taxonomic scope" value="Bacteria"/>
</dbReference>
<dbReference type="HOGENOM" id="CLU_038422_1_1_5"/>
<dbReference type="Proteomes" id="UP000007056">
    <property type="component" value="Chromosome"/>
</dbReference>
<dbReference type="GO" id="GO:0005737">
    <property type="term" value="C:cytoplasm"/>
    <property type="evidence" value="ECO:0007669"/>
    <property type="project" value="UniProtKB-SubCell"/>
</dbReference>
<dbReference type="GO" id="GO:0071424">
    <property type="term" value="F:rRNA (cytosine-N4-)-methyltransferase activity"/>
    <property type="evidence" value="ECO:0007669"/>
    <property type="project" value="UniProtKB-UniRule"/>
</dbReference>
<dbReference type="GO" id="GO:0070475">
    <property type="term" value="P:rRNA base methylation"/>
    <property type="evidence" value="ECO:0007669"/>
    <property type="project" value="UniProtKB-UniRule"/>
</dbReference>
<dbReference type="CDD" id="cd02440">
    <property type="entry name" value="AdoMet_MTases"/>
    <property type="match status" value="1"/>
</dbReference>
<dbReference type="FunFam" id="1.10.150.170:FF:000003">
    <property type="entry name" value="Ribosomal RNA small subunit methyltransferase H"/>
    <property type="match status" value="1"/>
</dbReference>
<dbReference type="Gene3D" id="1.10.150.170">
    <property type="entry name" value="Putative methyltransferase TM0872, insert domain"/>
    <property type="match status" value="1"/>
</dbReference>
<dbReference type="Gene3D" id="3.40.50.150">
    <property type="entry name" value="Vaccinia Virus protein VP39"/>
    <property type="match status" value="1"/>
</dbReference>
<dbReference type="HAMAP" id="MF_01007">
    <property type="entry name" value="16SrRNA_methyltr_H"/>
    <property type="match status" value="1"/>
</dbReference>
<dbReference type="InterPro" id="IPR002903">
    <property type="entry name" value="RsmH"/>
</dbReference>
<dbReference type="InterPro" id="IPR023397">
    <property type="entry name" value="SAM-dep_MeTrfase_MraW_recog"/>
</dbReference>
<dbReference type="InterPro" id="IPR029063">
    <property type="entry name" value="SAM-dependent_MTases_sf"/>
</dbReference>
<dbReference type="NCBIfam" id="TIGR00006">
    <property type="entry name" value="16S rRNA (cytosine(1402)-N(4))-methyltransferase RsmH"/>
    <property type="match status" value="1"/>
</dbReference>
<dbReference type="PANTHER" id="PTHR11265:SF0">
    <property type="entry name" value="12S RRNA N4-METHYLCYTIDINE METHYLTRANSFERASE"/>
    <property type="match status" value="1"/>
</dbReference>
<dbReference type="PANTHER" id="PTHR11265">
    <property type="entry name" value="S-ADENOSYL-METHYLTRANSFERASE MRAW"/>
    <property type="match status" value="1"/>
</dbReference>
<dbReference type="Pfam" id="PF01795">
    <property type="entry name" value="Methyltransf_5"/>
    <property type="match status" value="1"/>
</dbReference>
<dbReference type="PIRSF" id="PIRSF004486">
    <property type="entry name" value="MraW"/>
    <property type="match status" value="1"/>
</dbReference>
<dbReference type="SUPFAM" id="SSF81799">
    <property type="entry name" value="Putative methyltransferase TM0872, insert domain"/>
    <property type="match status" value="1"/>
</dbReference>
<dbReference type="SUPFAM" id="SSF53335">
    <property type="entry name" value="S-adenosyl-L-methionine-dependent methyltransferases"/>
    <property type="match status" value="1"/>
</dbReference>
<keyword id="KW-0963">Cytoplasm</keyword>
<keyword id="KW-0489">Methyltransferase</keyword>
<keyword id="KW-0698">rRNA processing</keyword>
<keyword id="KW-0949">S-adenosyl-L-methionine</keyword>
<keyword id="KW-0808">Transferase</keyword>
<accession>A8EYC5</accession>
<comment type="function">
    <text evidence="1">Specifically methylates the N4 position of cytidine in position 1402 (C1402) of 16S rRNA.</text>
</comment>
<comment type="catalytic activity">
    <reaction evidence="1">
        <text>cytidine(1402) in 16S rRNA + S-adenosyl-L-methionine = N(4)-methylcytidine(1402) in 16S rRNA + S-adenosyl-L-homocysteine + H(+)</text>
        <dbReference type="Rhea" id="RHEA:42928"/>
        <dbReference type="Rhea" id="RHEA-COMP:10286"/>
        <dbReference type="Rhea" id="RHEA-COMP:10287"/>
        <dbReference type="ChEBI" id="CHEBI:15378"/>
        <dbReference type="ChEBI" id="CHEBI:57856"/>
        <dbReference type="ChEBI" id="CHEBI:59789"/>
        <dbReference type="ChEBI" id="CHEBI:74506"/>
        <dbReference type="ChEBI" id="CHEBI:82748"/>
        <dbReference type="EC" id="2.1.1.199"/>
    </reaction>
</comment>
<comment type="subcellular location">
    <subcellularLocation>
        <location evidence="1">Cytoplasm</location>
    </subcellularLocation>
</comment>
<comment type="similarity">
    <text evidence="1">Belongs to the methyltransferase superfamily. RsmH family.</text>
</comment>
<evidence type="ECO:0000255" key="1">
    <source>
        <dbReference type="HAMAP-Rule" id="MF_01007"/>
    </source>
</evidence>
<gene>
    <name evidence="1" type="primary">rsmH</name>
    <name type="synonym">mraW</name>
    <name type="ordered locus">A1E_02065</name>
</gene>
<feature type="chain" id="PRO_1000062834" description="Ribosomal RNA small subunit methyltransferase H">
    <location>
        <begin position="1"/>
        <end position="308"/>
    </location>
</feature>
<feature type="binding site" evidence="1">
    <location>
        <begin position="33"/>
        <end position="35"/>
    </location>
    <ligand>
        <name>S-adenosyl-L-methionine</name>
        <dbReference type="ChEBI" id="CHEBI:59789"/>
    </ligand>
</feature>
<feature type="binding site" evidence="1">
    <location>
        <position position="51"/>
    </location>
    <ligand>
        <name>S-adenosyl-L-methionine</name>
        <dbReference type="ChEBI" id="CHEBI:59789"/>
    </ligand>
</feature>
<feature type="binding site" evidence="1">
    <location>
        <position position="82"/>
    </location>
    <ligand>
        <name>S-adenosyl-L-methionine</name>
        <dbReference type="ChEBI" id="CHEBI:59789"/>
    </ligand>
</feature>
<feature type="binding site" evidence="1">
    <location>
        <position position="96"/>
    </location>
    <ligand>
        <name>S-adenosyl-L-methionine</name>
        <dbReference type="ChEBI" id="CHEBI:59789"/>
    </ligand>
</feature>
<feature type="binding site" evidence="1">
    <location>
        <position position="103"/>
    </location>
    <ligand>
        <name>S-adenosyl-L-methionine</name>
        <dbReference type="ChEBI" id="CHEBI:59789"/>
    </ligand>
</feature>
<reference key="1">
    <citation type="submission" date="2007-09" db="EMBL/GenBank/DDBJ databases">
        <title>Complete genome sequence of Rickettsia canadensis.</title>
        <authorList>
            <person name="Madan A."/>
            <person name="Fahey J."/>
            <person name="Helton E."/>
            <person name="Ketteman M."/>
            <person name="Madan A."/>
            <person name="Rodrigues S."/>
            <person name="Sanchez A."/>
            <person name="Whiting M."/>
            <person name="Dasch G."/>
            <person name="Eremeeva M."/>
        </authorList>
    </citation>
    <scope>NUCLEOTIDE SEQUENCE [LARGE SCALE GENOMIC DNA]</scope>
    <source>
        <strain>McKiel</strain>
    </source>
</reference>
<sequence length="308" mass="35197">MQQSHIPVMLNEMLANLAPQDGKSYLDCTFGAGGYSKAILESCNCYVTALDRDPNVIKRAERIKQNYSTRFDFIETNFADSFAKLKEKKFDGIVLDLGVSSMQLDIADRGFSFLHDSPLDMRMSGQGLSAEEFINTVEEKELADIIYKYGDESFSRRIAKRIVEYRKTARINSTGKLAEIVRNSIGFRKGKIDPATKTFQAIRIYINDELRELERFLANVQNILNKDGRLVIVSFHSLEDRIVKHFFKENSEKPVARSKYSKDNPVIDPNKWLKIITNKAEAPSDKEVELNVRARSAKLRAAKAIYEY</sequence>